<name>14KL_BRUAB</name>
<proteinExistence type="inferred from homology"/>
<comment type="function">
    <text evidence="1">Has immunoglobulin-binding and hemagglutination properties, and can bind to mannose. Essential for virulence. May be involved in LPS biosynthesis or polysaccharide transport (By similarity).</text>
</comment>
<comment type="subcellular location">
    <subcellularLocation>
        <location evidence="3">Cell membrane</location>
        <topology evidence="3">Single-pass membrane protein</topology>
    </subcellularLocation>
</comment>
<comment type="similarity">
    <text evidence="3">Belongs to the BA14k family.</text>
</comment>
<accession>P0C8N0</accession>
<accession>Q44701</accession>
<accession>Q578L8</accession>
<protein>
    <recommendedName>
        <fullName>Lectin-like protein BA14k</fullName>
    </recommendedName>
</protein>
<evidence type="ECO:0000250" key="1"/>
<evidence type="ECO:0000255" key="2"/>
<evidence type="ECO:0000305" key="3"/>
<organism>
    <name type="scientific">Brucella abortus biovar 1 (strain 9-941)</name>
    <dbReference type="NCBI Taxonomy" id="262698"/>
    <lineage>
        <taxon>Bacteria</taxon>
        <taxon>Pseudomonadati</taxon>
        <taxon>Pseudomonadota</taxon>
        <taxon>Alphaproteobacteria</taxon>
        <taxon>Hyphomicrobiales</taxon>
        <taxon>Brucellaceae</taxon>
        <taxon>Brucella/Ochrobactrum group</taxon>
        <taxon>Brucella</taxon>
    </lineage>
</organism>
<keyword id="KW-1003">Cell membrane</keyword>
<keyword id="KW-0430">Lectin</keyword>
<keyword id="KW-0472">Membrane</keyword>
<keyword id="KW-0732">Signal</keyword>
<keyword id="KW-0812">Transmembrane</keyword>
<keyword id="KW-1133">Transmembrane helix</keyword>
<keyword id="KW-0843">Virulence</keyword>
<reference key="1">
    <citation type="journal article" date="2005" name="J. Bacteriol.">
        <title>Completion of the genome sequence of Brucella abortus and comparison to the highly similar genomes of Brucella melitensis and Brucella suis.</title>
        <authorList>
            <person name="Halling S.M."/>
            <person name="Peterson-Burch B.D."/>
            <person name="Bricker B.J."/>
            <person name="Zuerner R.L."/>
            <person name="Qing Z."/>
            <person name="Li L.-L."/>
            <person name="Kapur V."/>
            <person name="Alt D.P."/>
            <person name="Olsen S.C."/>
        </authorList>
    </citation>
    <scope>NUCLEOTIDE SEQUENCE [LARGE SCALE GENOMIC DNA]</scope>
    <source>
        <strain>9-941</strain>
    </source>
</reference>
<dbReference type="EMBL" id="AE017224">
    <property type="protein sequence ID" value="AAX75916.1"/>
    <property type="molecule type" value="Genomic_DNA"/>
</dbReference>
<dbReference type="PIR" id="AG3578">
    <property type="entry name" value="AG3578"/>
</dbReference>
<dbReference type="RefSeq" id="WP_002965908.1">
    <property type="nucleotide sequence ID" value="NC_006933.1"/>
</dbReference>
<dbReference type="EnsemblBacteria" id="AAX75916">
    <property type="protein sequence ID" value="AAX75916"/>
    <property type="gene ID" value="BruAb2_0497"/>
</dbReference>
<dbReference type="KEGG" id="bmb:BruAb2_0497"/>
<dbReference type="HOGENOM" id="CLU_095992_0_0_5"/>
<dbReference type="Proteomes" id="UP000000540">
    <property type="component" value="Chromosome II"/>
</dbReference>
<dbReference type="GO" id="GO:0005886">
    <property type="term" value="C:plasma membrane"/>
    <property type="evidence" value="ECO:0007669"/>
    <property type="project" value="UniProtKB-SubCell"/>
</dbReference>
<dbReference type="GO" id="GO:0030246">
    <property type="term" value="F:carbohydrate binding"/>
    <property type="evidence" value="ECO:0007669"/>
    <property type="project" value="UniProtKB-KW"/>
</dbReference>
<dbReference type="InterPro" id="IPR012413">
    <property type="entry name" value="BA14K"/>
</dbReference>
<dbReference type="Pfam" id="PF07886">
    <property type="entry name" value="BA14K"/>
    <property type="match status" value="1"/>
</dbReference>
<sequence>MNSFRKTCAGALALIFGATSIVPTVAAPMNMDRPAINQNVIQARAHYRPQNYNRGHRPGYWHGHRGYRHYRHGYRRHNDGWWYPLAAFGAGAIIGGAISQPRPVYRAPAGSPHVQWCYSRYKSYRASDNTFQPYNGPRKQCRSPYSR</sequence>
<gene>
    <name type="ordered locus">BruAb2_0497</name>
</gene>
<feature type="signal peptide" evidence="2">
    <location>
        <begin position="1"/>
        <end position="26"/>
    </location>
</feature>
<feature type="chain" id="PRO_0000361297" description="Lectin-like protein BA14k">
    <location>
        <begin position="27"/>
        <end position="147"/>
    </location>
</feature>
<feature type="transmembrane region" description="Helical" evidence="2">
    <location>
        <begin position="80"/>
        <end position="100"/>
    </location>
</feature>